<accession>Q5U220</accession>
<dbReference type="EMBL" id="BC086323">
    <property type="protein sequence ID" value="AAH86323.1"/>
    <property type="molecule type" value="mRNA"/>
</dbReference>
<dbReference type="RefSeq" id="NP_001008298.1">
    <property type="nucleotide sequence ID" value="NM_001008297.1"/>
</dbReference>
<dbReference type="FunCoup" id="Q5U220">
    <property type="interactions" value="174"/>
</dbReference>
<dbReference type="STRING" id="10116.ENSRNOP00000015011"/>
<dbReference type="PhosphoSitePlus" id="Q5U220"/>
<dbReference type="PaxDb" id="10116-ENSRNOP00000015011"/>
<dbReference type="Ensembl" id="ENSRNOT00000015011.6">
    <property type="protein sequence ID" value="ENSRNOP00000015011.3"/>
    <property type="gene ID" value="ENSRNOG00000011276.8"/>
</dbReference>
<dbReference type="GeneID" id="290529"/>
<dbReference type="KEGG" id="rno:290529"/>
<dbReference type="UCSC" id="RGD:1305689">
    <property type="organism name" value="rat"/>
</dbReference>
<dbReference type="AGR" id="RGD:1305689"/>
<dbReference type="CTD" id="80195"/>
<dbReference type="RGD" id="1305689">
    <property type="gene designation" value="Tmem254"/>
</dbReference>
<dbReference type="eggNOG" id="ENOG502S4F5">
    <property type="taxonomic scope" value="Eukaryota"/>
</dbReference>
<dbReference type="GeneTree" id="ENSGT00390000016042"/>
<dbReference type="HOGENOM" id="CLU_150378_0_0_1"/>
<dbReference type="InParanoid" id="Q5U220"/>
<dbReference type="OMA" id="IMYKGWW"/>
<dbReference type="PRO" id="PR:Q5U220"/>
<dbReference type="Proteomes" id="UP000002494">
    <property type="component" value="Chromosome 16"/>
</dbReference>
<dbReference type="Bgee" id="ENSRNOG00000011276">
    <property type="expression patterns" value="Expressed in stomach and 20 other cell types or tissues"/>
</dbReference>
<dbReference type="ExpressionAtlas" id="Q5U220">
    <property type="expression patterns" value="baseline and differential"/>
</dbReference>
<dbReference type="GO" id="GO:0016020">
    <property type="term" value="C:membrane"/>
    <property type="evidence" value="ECO:0007669"/>
    <property type="project" value="UniProtKB-SubCell"/>
</dbReference>
<dbReference type="InterPro" id="IPR028110">
    <property type="entry name" value="TMEM254"/>
</dbReference>
<dbReference type="PANTHER" id="PTHR34104">
    <property type="entry name" value="TRANSMEMBRANE PROTEIN 254"/>
    <property type="match status" value="1"/>
</dbReference>
<dbReference type="PANTHER" id="PTHR34104:SF3">
    <property type="entry name" value="TRANSMEMBRANE PROTEIN 254"/>
    <property type="match status" value="1"/>
</dbReference>
<dbReference type="Pfam" id="PF14934">
    <property type="entry name" value="TMEM254"/>
    <property type="match status" value="1"/>
</dbReference>
<organism>
    <name type="scientific">Rattus norvegicus</name>
    <name type="common">Rat</name>
    <dbReference type="NCBI Taxonomy" id="10116"/>
    <lineage>
        <taxon>Eukaryota</taxon>
        <taxon>Metazoa</taxon>
        <taxon>Chordata</taxon>
        <taxon>Craniata</taxon>
        <taxon>Vertebrata</taxon>
        <taxon>Euteleostomi</taxon>
        <taxon>Mammalia</taxon>
        <taxon>Eutheria</taxon>
        <taxon>Euarchontoglires</taxon>
        <taxon>Glires</taxon>
        <taxon>Rodentia</taxon>
        <taxon>Myomorpha</taxon>
        <taxon>Muroidea</taxon>
        <taxon>Muridae</taxon>
        <taxon>Murinae</taxon>
        <taxon>Rattus</taxon>
    </lineage>
</organism>
<reference key="1">
    <citation type="journal article" date="2004" name="Genome Res.">
        <title>The status, quality, and expansion of the NIH full-length cDNA project: the Mammalian Gene Collection (MGC).</title>
        <authorList>
            <consortium name="The MGC Project Team"/>
        </authorList>
    </citation>
    <scope>NUCLEOTIDE SEQUENCE [LARGE SCALE MRNA]</scope>
    <source>
        <tissue>Ovary</tissue>
    </source>
</reference>
<keyword id="KW-0472">Membrane</keyword>
<keyword id="KW-1185">Reference proteome</keyword>
<keyword id="KW-0812">Transmembrane</keyword>
<keyword id="KW-1133">Transmembrane helix</keyword>
<proteinExistence type="evidence at transcript level"/>
<comment type="subcellular location">
    <subcellularLocation>
        <location evidence="2">Membrane</location>
        <topology evidence="2">Multi-pass membrane protein</topology>
    </subcellularLocation>
</comment>
<protein>
    <recommendedName>
        <fullName>Transmembrane protein 254</fullName>
    </recommendedName>
</protein>
<feature type="chain" id="PRO_0000089799" description="Transmembrane protein 254">
    <location>
        <begin position="1"/>
        <end position="123"/>
    </location>
</feature>
<feature type="transmembrane region" description="Helical" evidence="1">
    <location>
        <begin position="15"/>
        <end position="35"/>
    </location>
</feature>
<feature type="transmembrane region" description="Helical" evidence="1">
    <location>
        <begin position="63"/>
        <end position="83"/>
    </location>
</feature>
<feature type="transmembrane region" description="Helical" evidence="1">
    <location>
        <begin position="95"/>
        <end position="115"/>
    </location>
</feature>
<sequence length="123" mass="14290">MGTATGASYFQRGSLFWFTVIAVSFSYYTWVVFWPQSIPYQSLGPLGPFTKYLVDHYHTLLRNGYWLAWLVHVGESLYALVLCRRKGITDSQAQLLWFLQTFLFGVASLSILFAYRPKHQKHN</sequence>
<name>TM254_RAT</name>
<gene>
    <name type="primary">Tmem254</name>
</gene>
<evidence type="ECO:0000255" key="1"/>
<evidence type="ECO:0000305" key="2"/>